<reference key="1">
    <citation type="journal article" date="2002" name="Proc. Natl. Acad. Sci. U.S.A.">
        <title>Mammalian mitogenomic relationships and the root of the eutherian tree.</title>
        <authorList>
            <person name="Arnason U."/>
            <person name="Adegoke J.A."/>
            <person name="Bodin K."/>
            <person name="Born E.W."/>
            <person name="Esa Y.B."/>
            <person name="Gullberg A."/>
            <person name="Nilsson M."/>
            <person name="Short R.V."/>
            <person name="Xu X."/>
            <person name="Janke A."/>
        </authorList>
    </citation>
    <scope>NUCLEOTIDE SEQUENCE [GENOMIC DNA]</scope>
</reference>
<reference key="2">
    <citation type="submission" date="2002-01" db="EMBL/GenBank/DDBJ databases">
        <title>Complete mitochondrial genome of a dugong.</title>
        <authorList>
            <person name="McLenachan P.A."/>
            <person name="Phillips M.J."/>
            <person name="Penny D."/>
        </authorList>
    </citation>
    <scope>NUCLEOTIDE SEQUENCE [GENOMIC DNA]</scope>
</reference>
<dbReference type="EMBL" id="AJ421723">
    <property type="protein sequence ID" value="CAD18913.1"/>
    <property type="molecule type" value="Genomic_DNA"/>
</dbReference>
<dbReference type="EMBL" id="AY075116">
    <property type="protein sequence ID" value="AAL79368.1"/>
    <property type="molecule type" value="Genomic_DNA"/>
</dbReference>
<dbReference type="RefSeq" id="NP_536763.1">
    <property type="nucleotide sequence ID" value="NC_003314.1"/>
</dbReference>
<dbReference type="SMR" id="Q8W9N1"/>
<dbReference type="GeneID" id="804500"/>
<dbReference type="CTD" id="4508"/>
<dbReference type="GO" id="GO:0005743">
    <property type="term" value="C:mitochondrial inner membrane"/>
    <property type="evidence" value="ECO:0007669"/>
    <property type="project" value="UniProtKB-SubCell"/>
</dbReference>
<dbReference type="GO" id="GO:0045259">
    <property type="term" value="C:proton-transporting ATP synthase complex"/>
    <property type="evidence" value="ECO:0000250"/>
    <property type="project" value="UniProtKB"/>
</dbReference>
<dbReference type="GO" id="GO:0015252">
    <property type="term" value="F:proton channel activity"/>
    <property type="evidence" value="ECO:0000250"/>
    <property type="project" value="UniProtKB"/>
</dbReference>
<dbReference type="GO" id="GO:0046933">
    <property type="term" value="F:proton-transporting ATP synthase activity, rotational mechanism"/>
    <property type="evidence" value="ECO:0007669"/>
    <property type="project" value="TreeGrafter"/>
</dbReference>
<dbReference type="GO" id="GO:0015986">
    <property type="term" value="P:proton motive force-driven ATP synthesis"/>
    <property type="evidence" value="ECO:0000250"/>
    <property type="project" value="UniProtKB"/>
</dbReference>
<dbReference type="GO" id="GO:1902600">
    <property type="term" value="P:proton transmembrane transport"/>
    <property type="evidence" value="ECO:0000250"/>
    <property type="project" value="UniProtKB"/>
</dbReference>
<dbReference type="CDD" id="cd00310">
    <property type="entry name" value="ATP-synt_Fo_a_6"/>
    <property type="match status" value="1"/>
</dbReference>
<dbReference type="FunFam" id="1.20.120.220:FF:000004">
    <property type="entry name" value="ATP synthase subunit a"/>
    <property type="match status" value="1"/>
</dbReference>
<dbReference type="Gene3D" id="1.20.120.220">
    <property type="entry name" value="ATP synthase, F0 complex, subunit A"/>
    <property type="match status" value="1"/>
</dbReference>
<dbReference type="InterPro" id="IPR000568">
    <property type="entry name" value="ATP_synth_F0_asu"/>
</dbReference>
<dbReference type="InterPro" id="IPR023011">
    <property type="entry name" value="ATP_synth_F0_asu_AS"/>
</dbReference>
<dbReference type="InterPro" id="IPR045083">
    <property type="entry name" value="ATP_synth_F0_asu_bact/mt"/>
</dbReference>
<dbReference type="InterPro" id="IPR035908">
    <property type="entry name" value="F0_ATP_A_sf"/>
</dbReference>
<dbReference type="NCBIfam" id="TIGR01131">
    <property type="entry name" value="ATP_synt_6_or_A"/>
    <property type="match status" value="1"/>
</dbReference>
<dbReference type="PANTHER" id="PTHR11410">
    <property type="entry name" value="ATP SYNTHASE SUBUNIT A"/>
    <property type="match status" value="1"/>
</dbReference>
<dbReference type="PANTHER" id="PTHR11410:SF0">
    <property type="entry name" value="ATP SYNTHASE SUBUNIT A"/>
    <property type="match status" value="1"/>
</dbReference>
<dbReference type="Pfam" id="PF00119">
    <property type="entry name" value="ATP-synt_A"/>
    <property type="match status" value="1"/>
</dbReference>
<dbReference type="PRINTS" id="PR00123">
    <property type="entry name" value="ATPASEA"/>
</dbReference>
<dbReference type="SUPFAM" id="SSF81336">
    <property type="entry name" value="F1F0 ATP synthase subunit A"/>
    <property type="match status" value="1"/>
</dbReference>
<dbReference type="PROSITE" id="PS00449">
    <property type="entry name" value="ATPASE_A"/>
    <property type="match status" value="1"/>
</dbReference>
<organism>
    <name type="scientific">Dugong dugon</name>
    <name type="common">Dugong</name>
    <name type="synonym">Trichechus dugon</name>
    <dbReference type="NCBI Taxonomy" id="29137"/>
    <lineage>
        <taxon>Eukaryota</taxon>
        <taxon>Metazoa</taxon>
        <taxon>Chordata</taxon>
        <taxon>Craniata</taxon>
        <taxon>Vertebrata</taxon>
        <taxon>Euteleostomi</taxon>
        <taxon>Mammalia</taxon>
        <taxon>Eutheria</taxon>
        <taxon>Afrotheria</taxon>
        <taxon>Sirenia</taxon>
        <taxon>Dugongidae</taxon>
        <taxon>Dugong</taxon>
    </lineage>
</organism>
<keyword id="KW-0066">ATP synthesis</keyword>
<keyword id="KW-0138">CF(0)</keyword>
<keyword id="KW-0375">Hydrogen ion transport</keyword>
<keyword id="KW-0406">Ion transport</keyword>
<keyword id="KW-0472">Membrane</keyword>
<keyword id="KW-0496">Mitochondrion</keyword>
<keyword id="KW-0999">Mitochondrion inner membrane</keyword>
<keyword id="KW-0812">Transmembrane</keyword>
<keyword id="KW-1133">Transmembrane helix</keyword>
<keyword id="KW-0813">Transport</keyword>
<protein>
    <recommendedName>
        <fullName evidence="1">ATP synthase F(0) complex subunit a</fullName>
    </recommendedName>
    <alternativeName>
        <fullName>F-ATPase protein 6</fullName>
    </alternativeName>
    <alternativeName>
        <fullName evidence="1">Proton-conducting channel, ATP synthase F(0) complex subunit a</fullName>
    </alternativeName>
</protein>
<name>ATP6_DUGDU</name>
<gene>
    <name evidence="1" type="primary">MT-ATP6</name>
    <name type="synonym">ATP6</name>
    <name type="synonym">ATPASE6</name>
    <name type="synonym">MTATP6</name>
</gene>
<comment type="function">
    <text evidence="1">Subunit a, of the mitochondrial membrane ATP synthase complex (F(1)F(0) ATP synthase or Complex V) that produces ATP from ADP in the presence of a proton gradient across the membrane which is generated by electron transport complexes of the respiratory chain. ATP synthase complex consist of a soluble F(1) head domain - the catalytic core - and a membrane F(1) domain - the membrane proton channel. These two domains are linked by a central stalk rotating inside the F(1) region and a stationary peripheral stalk. During catalysis, ATP synthesis in the catalytic domain of F(1) is coupled via a rotary mechanism of the central stalk subunits to proton translocation. With the subunit c (ATP5MC1), forms the proton-conducting channel in the F(0) domain, that contains two crucial half-channels (inlet and outlet) that facilitate proton movement from the mitochondrial intermembrane space (IMS) into the matrix. Protons are taken up via the inlet half-channel and released through the outlet half-channel, following a Grotthuss mechanism.</text>
</comment>
<comment type="catalytic activity">
    <reaction evidence="1">
        <text>H(+)(in) = H(+)(out)</text>
        <dbReference type="Rhea" id="RHEA:34979"/>
        <dbReference type="ChEBI" id="CHEBI:15378"/>
    </reaction>
</comment>
<comment type="subunit">
    <text evidence="1">Component of the ATP synthase complex composed at least of ATP5F1A/subunit alpha, ATP5F1B/subunit beta, ATP5MC1/subunit c (homooctomer), MT-ATP6/subunit a, MT-ATP8/subunit 8, ATP5ME/subunit e, ATP5MF/subunit f, ATP5MG/subunit g, ATP5MK/subunit k, ATP5MJ/subunit j, ATP5F1C/subunit gamma, ATP5F1D/subunit delta, ATP5F1E/subunit epsilon, ATP5PF/subunit F6, ATP5PB/subunit b, ATP5PD/subunit d, ATP5PO/subunit OSCP. ATP synthase complex consists of a soluble F(1) head domain (subunits alpha(3) and beta(3)) - the catalytic core - and a membrane F(0) domain - the membrane proton channel (subunits c, a, 8, e, f, g, k and j). These two domains are linked by a central stalk (subunits gamma, delta, and epsilon) rotating inside the F1 region and a stationary peripheral stalk (subunits F6, b, d, and OSCP). Interacts with DNAJC30; interaction is direct.</text>
</comment>
<comment type="subcellular location">
    <subcellularLocation>
        <location>Mitochondrion inner membrane</location>
        <topology>Multi-pass membrane protein</topology>
    </subcellularLocation>
</comment>
<comment type="similarity">
    <text evidence="3">Belongs to the ATPase A chain family.</text>
</comment>
<accession>Q8W9N1</accession>
<sequence length="226" mass="24780">MNENLFTSFITPTMMGLPIVILVIVFPAMLYPSPNRLINNRLISIQQWLVQLILKQMLLIHNSKGRTWALMLISLILFIGSTNLLGLVPYTFTPTTQLSMNLGMAIPLWAGAVITGFRHKAKASLAHFLPQGTPITLIPMLVVIETISLFIQPMALAIRLTANITAGHLLMHLIGGAVLALTSISPAAATITFIILLLLTILEFAVALIQAYVFTLLVSLYLHDNT</sequence>
<evidence type="ECO:0000250" key="1">
    <source>
        <dbReference type="UniProtKB" id="P00846"/>
    </source>
</evidence>
<evidence type="ECO:0000255" key="2"/>
<evidence type="ECO:0000305" key="3"/>
<geneLocation type="mitochondrion"/>
<feature type="chain" id="PRO_0000082119" description="ATP synthase F(0) complex subunit a">
    <location>
        <begin position="1"/>
        <end position="226"/>
    </location>
</feature>
<feature type="transmembrane region" description="Helical" evidence="2">
    <location>
        <begin position="9"/>
        <end position="29"/>
    </location>
</feature>
<feature type="transmembrane region" description="Helical" evidence="2">
    <location>
        <begin position="68"/>
        <end position="88"/>
    </location>
</feature>
<feature type="transmembrane region" description="Helical" evidence="2">
    <location>
        <begin position="97"/>
        <end position="117"/>
    </location>
</feature>
<feature type="transmembrane region" description="Helical" evidence="2">
    <location>
        <begin position="138"/>
        <end position="158"/>
    </location>
</feature>
<feature type="transmembrane region" description="Helical" evidence="2">
    <location>
        <begin position="164"/>
        <end position="184"/>
    </location>
</feature>
<feature type="transmembrane region" description="Helical" evidence="2">
    <location>
        <begin position="201"/>
        <end position="223"/>
    </location>
</feature>
<proteinExistence type="inferred from homology"/>